<name>EX7L_STAES</name>
<proteinExistence type="inferred from homology"/>
<organism>
    <name type="scientific">Staphylococcus epidermidis (strain ATCC 12228 / FDA PCI 1200)</name>
    <dbReference type="NCBI Taxonomy" id="176280"/>
    <lineage>
        <taxon>Bacteria</taxon>
        <taxon>Bacillati</taxon>
        <taxon>Bacillota</taxon>
        <taxon>Bacilli</taxon>
        <taxon>Bacillales</taxon>
        <taxon>Staphylococcaceae</taxon>
        <taxon>Staphylococcus</taxon>
    </lineage>
</organism>
<comment type="function">
    <text evidence="1">Bidirectionally degrades single-stranded DNA into large acid-insoluble oligonucleotides, which are then degraded further into small acid-soluble oligonucleotides.</text>
</comment>
<comment type="catalytic activity">
    <reaction evidence="1">
        <text>Exonucleolytic cleavage in either 5'- to 3'- or 3'- to 5'-direction to yield nucleoside 5'-phosphates.</text>
        <dbReference type="EC" id="3.1.11.6"/>
    </reaction>
</comment>
<comment type="subunit">
    <text evidence="1">Heterooligomer composed of large and small subunits.</text>
</comment>
<comment type="subcellular location">
    <subcellularLocation>
        <location evidence="1">Cytoplasm</location>
    </subcellularLocation>
</comment>
<comment type="similarity">
    <text evidence="1">Belongs to the XseA family.</text>
</comment>
<evidence type="ECO:0000255" key="1">
    <source>
        <dbReference type="HAMAP-Rule" id="MF_00378"/>
    </source>
</evidence>
<sequence>MTEYLSVSALTKYIKYKFDQDPHLQSVLIKGELSNFKKHSSGHLYFNVKDKESVISAMMFKGNASKLGFEPKEGDEVLIEARVSVYERRGNYQIYVNKMQLDGIGNLYQKLELLKKKLKKEGYFNQSNKKLIPKYPKKIAVLTASTGAAIRDIHSTINNRYPLVEQIQISTLVQGTQARQDIIEKIQYADSLDVDTIIVGRGGGSIEDLWNFNEEDVVKTIFNCQTPIISAVGHETDFTLSDFVADVRAATPTQAAVIATPDQYELLQQIKQYEYTLSRYIKQYIEHQKKQLNHISSYYKFKQPSLLYDQQIQKRDELERQLNHLLNTKVEKSKHHLKLLQQSFNFKNLNQQITQEKQSIYQLHSRLSKIMSNNITNLKTVLKNKLESLNNLSPTNTMLRGYAIVNKDNEVVTSTHKLNENDQISLTMKDGSVDATVKKVRCNDE</sequence>
<protein>
    <recommendedName>
        <fullName evidence="1">Exodeoxyribonuclease 7 large subunit</fullName>
        <ecNumber evidence="1">3.1.11.6</ecNumber>
    </recommendedName>
    <alternativeName>
        <fullName evidence="1">Exodeoxyribonuclease VII large subunit</fullName>
        <shortName evidence="1">Exonuclease VII large subunit</shortName>
    </alternativeName>
</protein>
<gene>
    <name evidence="1" type="primary">xseA</name>
    <name type="ordered locus">SE_1204</name>
</gene>
<accession>Q8CP38</accession>
<keyword id="KW-0963">Cytoplasm</keyword>
<keyword id="KW-0269">Exonuclease</keyword>
<keyword id="KW-0378">Hydrolase</keyword>
<keyword id="KW-0540">Nuclease</keyword>
<feature type="chain" id="PRO_0000197883" description="Exodeoxyribonuclease 7 large subunit">
    <location>
        <begin position="1"/>
        <end position="445"/>
    </location>
</feature>
<reference key="1">
    <citation type="journal article" date="2003" name="Mol. Microbiol.">
        <title>Genome-based analysis of virulence genes in a non-biofilm-forming Staphylococcus epidermidis strain (ATCC 12228).</title>
        <authorList>
            <person name="Zhang Y.-Q."/>
            <person name="Ren S.-X."/>
            <person name="Li H.-L."/>
            <person name="Wang Y.-X."/>
            <person name="Fu G."/>
            <person name="Yang J."/>
            <person name="Qin Z.-Q."/>
            <person name="Miao Y.-G."/>
            <person name="Wang W.-Y."/>
            <person name="Chen R.-S."/>
            <person name="Shen Y."/>
            <person name="Chen Z."/>
            <person name="Yuan Z.-H."/>
            <person name="Zhao G.-P."/>
            <person name="Qu D."/>
            <person name="Danchin A."/>
            <person name="Wen Y.-M."/>
        </authorList>
    </citation>
    <scope>NUCLEOTIDE SEQUENCE [LARGE SCALE GENOMIC DNA]</scope>
    <source>
        <strain>ATCC 12228 / FDA PCI 1200</strain>
    </source>
</reference>
<dbReference type="EC" id="3.1.11.6" evidence="1"/>
<dbReference type="EMBL" id="AE015929">
    <property type="protein sequence ID" value="AAO04803.1"/>
    <property type="molecule type" value="Genomic_DNA"/>
</dbReference>
<dbReference type="RefSeq" id="NP_764759.1">
    <property type="nucleotide sequence ID" value="NC_004461.1"/>
</dbReference>
<dbReference type="RefSeq" id="WP_002440019.1">
    <property type="nucleotide sequence ID" value="NZ_WBME01000006.1"/>
</dbReference>
<dbReference type="SMR" id="Q8CP38"/>
<dbReference type="KEGG" id="sep:SE_1204"/>
<dbReference type="PATRIC" id="fig|176280.10.peg.1174"/>
<dbReference type="eggNOG" id="COG1570">
    <property type="taxonomic scope" value="Bacteria"/>
</dbReference>
<dbReference type="HOGENOM" id="CLU_023625_2_0_9"/>
<dbReference type="OrthoDB" id="9802795at2"/>
<dbReference type="Proteomes" id="UP000001411">
    <property type="component" value="Chromosome"/>
</dbReference>
<dbReference type="GO" id="GO:0005737">
    <property type="term" value="C:cytoplasm"/>
    <property type="evidence" value="ECO:0007669"/>
    <property type="project" value="UniProtKB-SubCell"/>
</dbReference>
<dbReference type="GO" id="GO:0009318">
    <property type="term" value="C:exodeoxyribonuclease VII complex"/>
    <property type="evidence" value="ECO:0007669"/>
    <property type="project" value="InterPro"/>
</dbReference>
<dbReference type="GO" id="GO:0008855">
    <property type="term" value="F:exodeoxyribonuclease VII activity"/>
    <property type="evidence" value="ECO:0007669"/>
    <property type="project" value="UniProtKB-UniRule"/>
</dbReference>
<dbReference type="GO" id="GO:0003676">
    <property type="term" value="F:nucleic acid binding"/>
    <property type="evidence" value="ECO:0007669"/>
    <property type="project" value="InterPro"/>
</dbReference>
<dbReference type="GO" id="GO:0006308">
    <property type="term" value="P:DNA catabolic process"/>
    <property type="evidence" value="ECO:0007669"/>
    <property type="project" value="UniProtKB-UniRule"/>
</dbReference>
<dbReference type="CDD" id="cd04489">
    <property type="entry name" value="ExoVII_LU_OBF"/>
    <property type="match status" value="1"/>
</dbReference>
<dbReference type="HAMAP" id="MF_00378">
    <property type="entry name" value="Exonuc_7_L"/>
    <property type="match status" value="1"/>
</dbReference>
<dbReference type="InterPro" id="IPR003753">
    <property type="entry name" value="Exonuc_VII_L"/>
</dbReference>
<dbReference type="InterPro" id="IPR020579">
    <property type="entry name" value="Exonuc_VII_lsu_C"/>
</dbReference>
<dbReference type="InterPro" id="IPR025824">
    <property type="entry name" value="OB-fold_nuc-bd_dom"/>
</dbReference>
<dbReference type="NCBIfam" id="TIGR00237">
    <property type="entry name" value="xseA"/>
    <property type="match status" value="1"/>
</dbReference>
<dbReference type="PANTHER" id="PTHR30008">
    <property type="entry name" value="EXODEOXYRIBONUCLEASE 7 LARGE SUBUNIT"/>
    <property type="match status" value="1"/>
</dbReference>
<dbReference type="PANTHER" id="PTHR30008:SF0">
    <property type="entry name" value="EXODEOXYRIBONUCLEASE 7 LARGE SUBUNIT"/>
    <property type="match status" value="1"/>
</dbReference>
<dbReference type="Pfam" id="PF02601">
    <property type="entry name" value="Exonuc_VII_L"/>
    <property type="match status" value="1"/>
</dbReference>
<dbReference type="Pfam" id="PF13742">
    <property type="entry name" value="tRNA_anti_2"/>
    <property type="match status" value="1"/>
</dbReference>